<accession>P97700</accession>
<dbReference type="EMBL" id="U84727">
    <property type="protein sequence ID" value="AAB41797.1"/>
    <property type="molecule type" value="mRNA"/>
</dbReference>
<dbReference type="RefSeq" id="NP_071793.1">
    <property type="nucleotide sequence ID" value="NM_022398.2"/>
</dbReference>
<dbReference type="BioGRID" id="249007">
    <property type="interactions" value="2"/>
</dbReference>
<dbReference type="FunCoup" id="P97700">
    <property type="interactions" value="1789"/>
</dbReference>
<dbReference type="IntAct" id="P97700">
    <property type="interactions" value="3"/>
</dbReference>
<dbReference type="MINT" id="P97700"/>
<dbReference type="STRING" id="10116.ENSRNOP00000005144"/>
<dbReference type="GlyGen" id="P97700">
    <property type="glycosylation" value="3 sites, 1 O-linked glycan (3 sites)"/>
</dbReference>
<dbReference type="iPTMnet" id="P97700"/>
<dbReference type="PhosphoSitePlus" id="P97700"/>
<dbReference type="jPOST" id="P97700"/>
<dbReference type="PaxDb" id="10116-ENSRNOP00000005144"/>
<dbReference type="GeneID" id="64201"/>
<dbReference type="KEGG" id="rno:64201"/>
<dbReference type="UCSC" id="RGD:708476">
    <property type="organism name" value="rat"/>
</dbReference>
<dbReference type="AGR" id="RGD:708476"/>
<dbReference type="CTD" id="8402"/>
<dbReference type="RGD" id="708476">
    <property type="gene designation" value="Slc25a11"/>
</dbReference>
<dbReference type="eggNOG" id="KOG0759">
    <property type="taxonomic scope" value="Eukaryota"/>
</dbReference>
<dbReference type="InParanoid" id="P97700"/>
<dbReference type="PhylomeDB" id="P97700"/>
<dbReference type="Reactome" id="R-RNO-428643">
    <property type="pathway name" value="Organic anion transporters"/>
</dbReference>
<dbReference type="Reactome" id="R-RNO-9856872">
    <property type="pathway name" value="Malate-aspartate shuttle"/>
</dbReference>
<dbReference type="PRO" id="PR:P97700"/>
<dbReference type="Proteomes" id="UP000002494">
    <property type="component" value="Unplaced"/>
</dbReference>
<dbReference type="GO" id="GO:0005743">
    <property type="term" value="C:mitochondrial inner membrane"/>
    <property type="evidence" value="ECO:0000266"/>
    <property type="project" value="RGD"/>
</dbReference>
<dbReference type="GO" id="GO:0015139">
    <property type="term" value="F:alpha-ketoglutarate transmembrane transporter activity"/>
    <property type="evidence" value="ECO:0000315"/>
    <property type="project" value="RGD"/>
</dbReference>
<dbReference type="GO" id="GO:0015367">
    <property type="term" value="F:oxoglutarate:malate antiporter activity"/>
    <property type="evidence" value="ECO:0000266"/>
    <property type="project" value="RGD"/>
</dbReference>
<dbReference type="GO" id="GO:0022857">
    <property type="term" value="F:transmembrane transporter activity"/>
    <property type="evidence" value="ECO:0000318"/>
    <property type="project" value="GO_Central"/>
</dbReference>
<dbReference type="GO" id="GO:0006094">
    <property type="term" value="P:gluconeogenesis"/>
    <property type="evidence" value="ECO:0000266"/>
    <property type="project" value="RGD"/>
</dbReference>
<dbReference type="GO" id="GO:0006869">
    <property type="term" value="P:lipid transport"/>
    <property type="evidence" value="ECO:0007669"/>
    <property type="project" value="UniProtKB-KW"/>
</dbReference>
<dbReference type="GO" id="GO:0043490">
    <property type="term" value="P:malate-aspartate shuttle"/>
    <property type="evidence" value="ECO:0000266"/>
    <property type="project" value="RGD"/>
</dbReference>
<dbReference type="FunFam" id="1.50.40.10:FF:000013">
    <property type="entry name" value="Mitochondrial 2-oxoglutarate/malate carrier protein-like protein"/>
    <property type="match status" value="1"/>
</dbReference>
<dbReference type="Gene3D" id="1.50.40.10">
    <property type="entry name" value="Mitochondrial carrier domain"/>
    <property type="match status" value="1"/>
</dbReference>
<dbReference type="InterPro" id="IPR050391">
    <property type="entry name" value="Mito_Metabolite_Transporter"/>
</dbReference>
<dbReference type="InterPro" id="IPR018108">
    <property type="entry name" value="Mitochondrial_sb/sol_carrier"/>
</dbReference>
<dbReference type="InterPro" id="IPR023395">
    <property type="entry name" value="Mt_carrier_dom_sf"/>
</dbReference>
<dbReference type="PANTHER" id="PTHR45618">
    <property type="entry name" value="MITOCHONDRIAL DICARBOXYLATE CARRIER-RELATED"/>
    <property type="match status" value="1"/>
</dbReference>
<dbReference type="Pfam" id="PF00153">
    <property type="entry name" value="Mito_carr"/>
    <property type="match status" value="3"/>
</dbReference>
<dbReference type="SUPFAM" id="SSF103506">
    <property type="entry name" value="Mitochondrial carrier"/>
    <property type="match status" value="1"/>
</dbReference>
<dbReference type="PROSITE" id="PS50920">
    <property type="entry name" value="SOLCAR"/>
    <property type="match status" value="3"/>
</dbReference>
<comment type="function">
    <text evidence="1 4 5 6 7">Catalyzes the transport of 2-oxoglutarate (alpha-oxoglutarate) across the inner mitochondrial membrane in an electroneutral exchange for malate (PubMed:3355813, PubMed:5083502, PubMed:7703504). Can also exchange 2-oxoglutarate for other dicarboxylic acids such as malonate, succinate, maleate and oxaloacetate, although with lower affinity (PubMed:3355813, PubMed:7703504). Contributes to several metabolic processes, including the malate-aspartate shuttle, the oxoglutarate/isocitrate shuttle, in gluconeogenesis from lactate, and in nitrogen metabolism (PubMed:3355813, PubMed:5083502). Maintains mitochondrial fusion and fission events, and the organization and morphology of cristae (By similarity). Involved in the regulation of apoptosis (PubMed:16291728). Helps protect from cytotoxic-induced apoptosis by modulating glutathione levels in mitochondria (PubMed:16291728).</text>
</comment>
<comment type="catalytic activity">
    <reaction evidence="5 6 7">
        <text>(S)-malate(in) + 2-oxoglutarate(out) = (S)-malate(out) + 2-oxoglutarate(in)</text>
        <dbReference type="Rhea" id="RHEA:71587"/>
        <dbReference type="ChEBI" id="CHEBI:15589"/>
        <dbReference type="ChEBI" id="CHEBI:16810"/>
    </reaction>
</comment>
<comment type="catalytic activity">
    <reaction evidence="11">
        <text>malonate(in) + 2-oxoglutarate(out) = malonate(out) + 2-oxoglutarate(in)</text>
        <dbReference type="Rhea" id="RHEA:71591"/>
        <dbReference type="ChEBI" id="CHEBI:15792"/>
        <dbReference type="ChEBI" id="CHEBI:16810"/>
    </reaction>
</comment>
<comment type="catalytic activity">
    <reaction evidence="11">
        <text>succinate(in) + 2-oxoglutarate(out) = succinate(out) + 2-oxoglutarate(in)</text>
        <dbReference type="Rhea" id="RHEA:71595"/>
        <dbReference type="ChEBI" id="CHEBI:16810"/>
        <dbReference type="ChEBI" id="CHEBI:30031"/>
    </reaction>
</comment>
<comment type="catalytic activity">
    <reaction evidence="11">
        <text>maleate(in) + 2-oxoglutarate(out) = maleate(out) + 2-oxoglutarate(in)</text>
        <dbReference type="Rhea" id="RHEA:71599"/>
        <dbReference type="ChEBI" id="CHEBI:16810"/>
        <dbReference type="ChEBI" id="CHEBI:30780"/>
    </reaction>
</comment>
<comment type="catalytic activity">
    <reaction evidence="11">
        <text>oxaloacetate(in) + 2-oxoglutarate(out) = oxaloacetate(out) + 2-oxoglutarate(in)</text>
        <dbReference type="Rhea" id="RHEA:71603"/>
        <dbReference type="ChEBI" id="CHEBI:16452"/>
        <dbReference type="ChEBI" id="CHEBI:16810"/>
    </reaction>
</comment>
<comment type="subunit">
    <text evidence="1">Interacts with SMIM26.</text>
</comment>
<comment type="subcellular location">
    <subcellularLocation>
        <location evidence="11 12">Mitochondrion inner membrane</location>
        <topology evidence="3">Multi-pass membrane protein</topology>
    </subcellularLocation>
</comment>
<comment type="tissue specificity">
    <text evidence="7">Expressed in liver, heart and brain.</text>
</comment>
<comment type="similarity">
    <text evidence="10">Belongs to the mitochondrial carrier (TC 2.A.29) family.</text>
</comment>
<feature type="initiator methionine" description="Removed" evidence="1">
    <location>
        <position position="1"/>
    </location>
</feature>
<feature type="chain" id="PRO_0000090627" description="Mitochondrial 2-oxoglutarate/malate carrier protein">
    <location>
        <begin position="2"/>
        <end position="314"/>
    </location>
</feature>
<feature type="transmembrane region" description="Helical; Name=1" evidence="3">
    <location>
        <begin position="24"/>
        <end position="42"/>
    </location>
</feature>
<feature type="transmembrane region" description="Helical; Name=2" evidence="3">
    <location>
        <begin position="83"/>
        <end position="101"/>
    </location>
</feature>
<feature type="transmembrane region" description="Helical; Name=3" evidence="3">
    <location>
        <begin position="119"/>
        <end position="140"/>
    </location>
</feature>
<feature type="transmembrane region" description="Helical; Name=4" evidence="3">
    <location>
        <begin position="183"/>
        <end position="202"/>
    </location>
</feature>
<feature type="transmembrane region" description="Helical; Name=5" evidence="3">
    <location>
        <begin position="222"/>
        <end position="240"/>
    </location>
</feature>
<feature type="transmembrane region" description="Helical; Name=6" evidence="3">
    <location>
        <begin position="281"/>
        <end position="300"/>
    </location>
</feature>
<feature type="repeat" description="Solcar 1">
    <location>
        <begin position="23"/>
        <end position="108"/>
    </location>
</feature>
<feature type="repeat" description="Solcar 2">
    <location>
        <begin position="117"/>
        <end position="208"/>
    </location>
</feature>
<feature type="repeat" description="Solcar 3">
    <location>
        <begin position="217"/>
        <end position="306"/>
    </location>
</feature>
<feature type="modified residue" description="N-acetylalanine" evidence="1">
    <location>
        <position position="2"/>
    </location>
</feature>
<feature type="modified residue" description="Phosphoserine" evidence="1">
    <location>
        <position position="6"/>
    </location>
</feature>
<feature type="modified residue" description="N6-succinyllysine" evidence="2">
    <location>
        <position position="57"/>
    </location>
</feature>
<feature type="modified residue" description="N6-acetyllysine" evidence="1">
    <location>
        <position position="73"/>
    </location>
</feature>
<feature type="modified residue" description="Phosphotyrosine" evidence="2">
    <location>
        <position position="102"/>
    </location>
</feature>
<feature type="modified residue" description="N6-acetyllysine" evidence="2">
    <location>
        <position position="256"/>
    </location>
</feature>
<reference key="1">
    <citation type="submission" date="1997-02" db="EMBL/GenBank/DDBJ databases">
        <authorList>
            <person name="Bei D."/>
            <person name="Lehmann J."/>
        </authorList>
    </citation>
    <scope>NUCLEOTIDE SEQUENCE [MRNA]</scope>
    <source>
        <tissue>Brain</tissue>
    </source>
</reference>
<reference key="2">
    <citation type="journal article" date="1972" name="Eur. J. Biochem.">
        <title>Kinetics and specificity of the oxoglutarate carrier in rat-liver mitochondria.</title>
        <authorList>
            <person name="Palmieri F."/>
            <person name="Quagliariello E."/>
            <person name="Klingenberger M."/>
        </authorList>
    </citation>
    <scope>FUNCTION</scope>
    <scope>SUBCELLULAR LOCATION</scope>
    <scope>TRANSPORT ACTIVITY</scope>
</reference>
<reference key="3">
    <citation type="journal article" date="1988" name="Biochim. Biophys. Acta">
        <title>Purification and reconstitution of two anion carriers from rat liver mitochondria: the dicarboxylate and the 2-oxoglutarate carrier.</title>
        <authorList>
            <person name="Bisaccia F."/>
            <person name="Indiveri C."/>
            <person name="Palmieri F."/>
        </authorList>
    </citation>
    <scope>FUNCTION</scope>
    <scope>SUBCELLULAR LOCATION</scope>
    <scope>TRANSPORT ACTIVITY</scope>
</reference>
<reference key="4">
    <citation type="journal article" date="1994" name="DNA Seq.">
        <title>Cloning and sequencing of the rat cDNA encoding the mitochondrial 2-oxoglutarate carrier protein.</title>
        <authorList>
            <person name="Dolce V."/>
            <person name="Messina A."/>
            <person name="Cambria A."/>
            <person name="Palmieri F."/>
        </authorList>
    </citation>
    <scope>FUNCTION</scope>
    <scope>TISSUE SPECIFICITY</scope>
    <scope>TRANSPORT ACTIVITY</scope>
</reference>
<reference key="5">
    <citation type="journal article" date="2006" name="J. Pharmacol. Exp. Ther.">
        <title>Modulation of expression of rat mitochondrial 2-oxoglutarate carrier in NRK-52E cells alters mitochondrial transport and accumulation of glutathione and susceptibility to chemically induced apoptosis.</title>
        <authorList>
            <person name="Xu F."/>
            <person name="Putt D.A."/>
            <person name="Matherly L.H."/>
            <person name="Lash L.H."/>
        </authorList>
    </citation>
    <scope>FUNCTION</scope>
</reference>
<reference key="6">
    <citation type="journal article" date="2012" name="Nat. Commun.">
        <title>Quantitative maps of protein phosphorylation sites across 14 different rat organs and tissues.</title>
        <authorList>
            <person name="Lundby A."/>
            <person name="Secher A."/>
            <person name="Lage K."/>
            <person name="Nordsborg N.B."/>
            <person name="Dmytriyev A."/>
            <person name="Lundby C."/>
            <person name="Olsen J.V."/>
        </authorList>
    </citation>
    <scope>IDENTIFICATION BY MASS SPECTROMETRY [LARGE SCALE ANALYSIS]</scope>
</reference>
<name>M2OM_RAT</name>
<proteinExistence type="evidence at protein level"/>
<keyword id="KW-0007">Acetylation</keyword>
<keyword id="KW-0050">Antiport</keyword>
<keyword id="KW-0445">Lipid transport</keyword>
<keyword id="KW-0472">Membrane</keyword>
<keyword id="KW-0496">Mitochondrion</keyword>
<keyword id="KW-0999">Mitochondrion inner membrane</keyword>
<keyword id="KW-0597">Phosphoprotein</keyword>
<keyword id="KW-1185">Reference proteome</keyword>
<keyword id="KW-0677">Repeat</keyword>
<keyword id="KW-0812">Transmembrane</keyword>
<keyword id="KW-1133">Transmembrane helix</keyword>
<keyword id="KW-0813">Transport</keyword>
<evidence type="ECO:0000250" key="1">
    <source>
        <dbReference type="UniProtKB" id="Q02978"/>
    </source>
</evidence>
<evidence type="ECO:0000250" key="2">
    <source>
        <dbReference type="UniProtKB" id="Q9CR62"/>
    </source>
</evidence>
<evidence type="ECO:0000255" key="3"/>
<evidence type="ECO:0000269" key="4">
    <source>
    </source>
</evidence>
<evidence type="ECO:0000269" key="5">
    <source>
    </source>
</evidence>
<evidence type="ECO:0000269" key="6">
    <source>
    </source>
</evidence>
<evidence type="ECO:0000269" key="7">
    <source>
    </source>
</evidence>
<evidence type="ECO:0000303" key="8">
    <source>
    </source>
</evidence>
<evidence type="ECO:0000303" key="9">
    <source>
    </source>
</evidence>
<evidence type="ECO:0000305" key="10"/>
<evidence type="ECO:0000305" key="11">
    <source>
    </source>
</evidence>
<evidence type="ECO:0000305" key="12">
    <source>
    </source>
</evidence>
<sequence length="314" mass="34244">MAATASPGAGRMDGKPRTSPKSVKFLFGGLAGMGATVFVQPLDLVXNRMQLSGEGAKTREYKTSFHALTSILKAEGLRGIYTGLSAGLLRQATYTTTRLGIYTVLFERLTGADGTPPGFLLKALIGMTAGATGAFVGPPAEVALIRMTADGRLPADQRRGYKNVFNALIRIAREEGVPTLWRGCIPTMARAVVVNAAQLASYSQSKQFLLDSGYFSDNILCHFCAIMISGLVTTAASMPVDIVKTRIQNMRMIDEKPEYKNGLDVLLKVVRYEGFFSLWKGFTPYYARLGPHTVLTFIFLEQMNKAYKRLFLSG</sequence>
<gene>
    <name type="primary">Slc25a11</name>
    <name type="synonym">Slc20a4</name>
</gene>
<protein>
    <recommendedName>
        <fullName evidence="8 9">Mitochondrial 2-oxoglutarate/malate carrier protein</fullName>
        <shortName>OGCP</shortName>
        <shortName>alpha-oxoglutarate carrier</shortName>
    </recommendedName>
    <alternativeName>
        <fullName>Solute carrier family 25 member 11</fullName>
        <shortName>SLC25A11</shortName>
    </alternativeName>
</protein>
<organism>
    <name type="scientific">Rattus norvegicus</name>
    <name type="common">Rat</name>
    <dbReference type="NCBI Taxonomy" id="10116"/>
    <lineage>
        <taxon>Eukaryota</taxon>
        <taxon>Metazoa</taxon>
        <taxon>Chordata</taxon>
        <taxon>Craniata</taxon>
        <taxon>Vertebrata</taxon>
        <taxon>Euteleostomi</taxon>
        <taxon>Mammalia</taxon>
        <taxon>Eutheria</taxon>
        <taxon>Euarchontoglires</taxon>
        <taxon>Glires</taxon>
        <taxon>Rodentia</taxon>
        <taxon>Myomorpha</taxon>
        <taxon>Muroidea</taxon>
        <taxon>Muridae</taxon>
        <taxon>Murinae</taxon>
        <taxon>Rattus</taxon>
    </lineage>
</organism>